<protein>
    <recommendedName>
        <fullName>Uncharacterized mitochondrial protein ymf14</fullName>
    </recommendedName>
    <alternativeName>
        <fullName>ORF109</fullName>
    </alternativeName>
</protein>
<feature type="chain" id="PRO_0000196838" description="Uncharacterized mitochondrial protein ymf14">
    <location>
        <begin position="1"/>
        <end position="109"/>
    </location>
</feature>
<proteinExistence type="predicted"/>
<sequence>MICFIFTYKDFIIKMSTFWQNLWLIYLFIVFYVLGMSFVVWLLLRSASIKNFIYTLVAGVAEAAAQATQTELNYHACKRYTKACNDADIPVNPHKIEELTTPRGGTGRN</sequence>
<comment type="subcellular location">
    <subcellularLocation>
        <location evidence="1">Mitochondrion</location>
    </subcellularLocation>
</comment>
<keyword id="KW-0496">Mitochondrion</keyword>
<name>YMF14_MARPO</name>
<accession>P38458</accession>
<dbReference type="EMBL" id="M68929">
    <property type="protein sequence ID" value="AAC09433.1"/>
    <property type="molecule type" value="Genomic_DNA"/>
</dbReference>
<dbReference type="PIR" id="S25989">
    <property type="entry name" value="S25989"/>
</dbReference>
<dbReference type="SMR" id="P38458"/>
<dbReference type="GO" id="GO:0005739">
    <property type="term" value="C:mitochondrion"/>
    <property type="evidence" value="ECO:0007669"/>
    <property type="project" value="UniProtKB-SubCell"/>
</dbReference>
<reference key="1">
    <citation type="journal article" date="1992" name="J. Mol. Biol.">
        <title>Gene organization deduced from the complete sequence of liverwort Marchantia polymorpha mitochondrial DNA. A primitive form of plant mitochondrial genome.</title>
        <authorList>
            <person name="Oda K."/>
            <person name="Yamato K."/>
            <person name="Ohta E."/>
            <person name="Nakamura Y."/>
            <person name="Takemura M."/>
            <person name="Nozato N."/>
            <person name="Akashi K."/>
            <person name="Kanegae T."/>
            <person name="Ogura Y."/>
            <person name="Kohchi T."/>
            <person name="Ohyama K."/>
        </authorList>
    </citation>
    <scope>NUCLEOTIDE SEQUENCE [GENOMIC DNA]</scope>
</reference>
<evidence type="ECO:0000305" key="1"/>
<gene>
    <name type="primary">YMF14</name>
</gene>
<geneLocation type="mitochondrion"/>
<organism>
    <name type="scientific">Marchantia polymorpha</name>
    <name type="common">Common liverwort</name>
    <name type="synonym">Marchantia aquatica</name>
    <dbReference type="NCBI Taxonomy" id="3197"/>
    <lineage>
        <taxon>Eukaryota</taxon>
        <taxon>Viridiplantae</taxon>
        <taxon>Streptophyta</taxon>
        <taxon>Embryophyta</taxon>
        <taxon>Marchantiophyta</taxon>
        <taxon>Marchantiopsida</taxon>
        <taxon>Marchantiidae</taxon>
        <taxon>Marchantiales</taxon>
        <taxon>Marchantiaceae</taxon>
        <taxon>Marchantia</taxon>
    </lineage>
</organism>